<organism>
    <name type="scientific">Arabidopsis thaliana</name>
    <name type="common">Mouse-ear cress</name>
    <dbReference type="NCBI Taxonomy" id="3702"/>
    <lineage>
        <taxon>Eukaryota</taxon>
        <taxon>Viridiplantae</taxon>
        <taxon>Streptophyta</taxon>
        <taxon>Embryophyta</taxon>
        <taxon>Tracheophyta</taxon>
        <taxon>Spermatophyta</taxon>
        <taxon>Magnoliopsida</taxon>
        <taxon>eudicotyledons</taxon>
        <taxon>Gunneridae</taxon>
        <taxon>Pentapetalae</taxon>
        <taxon>rosids</taxon>
        <taxon>malvids</taxon>
        <taxon>Brassicales</taxon>
        <taxon>Brassicaceae</taxon>
        <taxon>Camelineae</taxon>
        <taxon>Arabidopsis</taxon>
    </lineage>
</organism>
<feature type="chain" id="PRO_0000392057" description="Omega-hydroxypalmitate O-feruloyl transferase">
    <location>
        <begin position="1"/>
        <end position="457"/>
    </location>
</feature>
<feature type="active site" description="Proton acceptor" evidence="1">
    <location>
        <position position="184"/>
    </location>
</feature>
<feature type="active site" description="Proton acceptor" evidence="1">
    <location>
        <position position="404"/>
    </location>
</feature>
<name>HHT1_ARATH</name>
<proteinExistence type="evidence at protein level"/>
<keyword id="KW-0012">Acyltransferase</keyword>
<keyword id="KW-0025">Alternative splicing</keyword>
<keyword id="KW-0961">Cell wall biogenesis/degradation</keyword>
<keyword id="KW-1185">Reference proteome</keyword>
<keyword id="KW-0808">Transferase</keyword>
<protein>
    <recommendedName>
        <fullName>Omega-hydroxypalmitate O-feruloyl transferase</fullName>
        <ecNumber>2.3.1.188</ecNumber>
    </recommendedName>
    <alternativeName>
        <fullName>Omega-hydroxyacid hydroxycinnamoyltransferase</fullName>
    </alternativeName>
    <alternativeName>
        <fullName>Protein ALIPHATIC SUBERIN FERULOYL TRANSFERASE</fullName>
    </alternativeName>
</protein>
<reference key="1">
    <citation type="journal article" date="2009" name="Proc. Natl. Acad. Sci. U.S.A.">
        <title>A hydroxycinnamoyltransferase responsible for synthesizing suberin aromatics in Arabidopsis.</title>
        <authorList>
            <person name="Gou J.Y."/>
            <person name="Yu X.H."/>
            <person name="Liu C.J."/>
        </authorList>
    </citation>
    <scope>NUCLEOTIDE SEQUENCE [MRNA]</scope>
    <scope>FUNCTION</scope>
    <scope>CATALYTIC ACTIVITY</scope>
    <scope>DISRUPTION PHENOTYPE</scope>
    <scope>TISSUE SPECIFICITY</scope>
</reference>
<reference key="2">
    <citation type="journal article" date="1998" name="DNA Res.">
        <title>Structural analysis of Arabidopsis thaliana chromosome 5. IV. Sequence features of the regions of 1,456,315 bp covered by nineteen physically assigned P1 and TAC clones.</title>
        <authorList>
            <person name="Sato S."/>
            <person name="Kaneko T."/>
            <person name="Kotani H."/>
            <person name="Nakamura Y."/>
            <person name="Asamizu E."/>
            <person name="Miyajima N."/>
            <person name="Tabata S."/>
        </authorList>
    </citation>
    <scope>NUCLEOTIDE SEQUENCE [LARGE SCALE GENOMIC DNA]</scope>
    <source>
        <strain>cv. Columbia</strain>
    </source>
</reference>
<reference key="3">
    <citation type="journal article" date="2017" name="Plant J.">
        <title>Araport11: a complete reannotation of the Arabidopsis thaliana reference genome.</title>
        <authorList>
            <person name="Cheng C.Y."/>
            <person name="Krishnakumar V."/>
            <person name="Chan A.P."/>
            <person name="Thibaud-Nissen F."/>
            <person name="Schobel S."/>
            <person name="Town C.D."/>
        </authorList>
    </citation>
    <scope>GENOME REANNOTATION</scope>
    <source>
        <strain>cv. Columbia</strain>
    </source>
</reference>
<reference key="4">
    <citation type="journal article" date="2003" name="Science">
        <title>Empirical analysis of transcriptional activity in the Arabidopsis genome.</title>
        <authorList>
            <person name="Yamada K."/>
            <person name="Lim J."/>
            <person name="Dale J.M."/>
            <person name="Chen H."/>
            <person name="Shinn P."/>
            <person name="Palm C.J."/>
            <person name="Southwick A.M."/>
            <person name="Wu H.C."/>
            <person name="Kim C.J."/>
            <person name="Nguyen M."/>
            <person name="Pham P.K."/>
            <person name="Cheuk R.F."/>
            <person name="Karlin-Newmann G."/>
            <person name="Liu S.X."/>
            <person name="Lam B."/>
            <person name="Sakano H."/>
            <person name="Wu T."/>
            <person name="Yu G."/>
            <person name="Miranda M."/>
            <person name="Quach H.L."/>
            <person name="Tripp M."/>
            <person name="Chang C.H."/>
            <person name="Lee J.M."/>
            <person name="Toriumi M.J."/>
            <person name="Chan M.M."/>
            <person name="Tang C.C."/>
            <person name="Onodera C.S."/>
            <person name="Deng J.M."/>
            <person name="Akiyama K."/>
            <person name="Ansari Y."/>
            <person name="Arakawa T."/>
            <person name="Banh J."/>
            <person name="Banno F."/>
            <person name="Bowser L."/>
            <person name="Brooks S.Y."/>
            <person name="Carninci P."/>
            <person name="Chao Q."/>
            <person name="Choy N."/>
            <person name="Enju A."/>
            <person name="Goldsmith A.D."/>
            <person name="Gurjal M."/>
            <person name="Hansen N.F."/>
            <person name="Hayashizaki Y."/>
            <person name="Johnson-Hopson C."/>
            <person name="Hsuan V.W."/>
            <person name="Iida K."/>
            <person name="Karnes M."/>
            <person name="Khan S."/>
            <person name="Koesema E."/>
            <person name="Ishida J."/>
            <person name="Jiang P.X."/>
            <person name="Jones T."/>
            <person name="Kawai J."/>
            <person name="Kamiya A."/>
            <person name="Meyers C."/>
            <person name="Nakajima M."/>
            <person name="Narusaka M."/>
            <person name="Seki M."/>
            <person name="Sakurai T."/>
            <person name="Satou M."/>
            <person name="Tamse R."/>
            <person name="Vaysberg M."/>
            <person name="Wallender E.K."/>
            <person name="Wong C."/>
            <person name="Yamamura Y."/>
            <person name="Yuan S."/>
            <person name="Shinozaki K."/>
            <person name="Davis R.W."/>
            <person name="Theologis A."/>
            <person name="Ecker J.R."/>
        </authorList>
    </citation>
    <scope>NUCLEOTIDE SEQUENCE [LARGE SCALE MRNA]</scope>
    <source>
        <strain>cv. Columbia</strain>
    </source>
</reference>
<reference key="5">
    <citation type="journal article" date="2009" name="Plant Physiol.">
        <title>Identification of an Arabidopsis feruloyl-coenzyme A transferase required for suberin synthesis.</title>
        <authorList>
            <person name="Molina I."/>
            <person name="Li-Beisson Y."/>
            <person name="Beisson F."/>
            <person name="Ohlrogge J.B."/>
            <person name="Pollard M."/>
        </authorList>
    </citation>
    <scope>FUNCTION</scope>
    <scope>CATALYTIC ACTIVITY</scope>
    <scope>TISSUE SPECIFICITY</scope>
    <scope>DISRUPTION PHENOTYPE</scope>
</reference>
<gene>
    <name type="primary">HHT1</name>
    <name type="synonym">ASFT</name>
    <name type="ordered locus">At5g41040</name>
    <name type="ORF">MEE6.11</name>
</gene>
<accession>Q94CD1</accession>
<accession>Q9FLM5</accession>
<comment type="function">
    <text evidence="2 3">Involved in the synthesis of aromatics of the suberin polymer. Specifically affects the accumulation of the ferulate constituent of suberin in roots and seeds, but has no effect on the content of p-coumarate or sinapate.</text>
</comment>
<comment type="catalytic activity">
    <reaction evidence="2 3">
        <text>16-hydroxyhexadecanoate + (E)-feruloyl-CoA = 16-feruloyloxyhexadecanoate + CoA</text>
        <dbReference type="Rhea" id="RHEA:26470"/>
        <dbReference type="ChEBI" id="CHEBI:55329"/>
        <dbReference type="ChEBI" id="CHEBI:55331"/>
        <dbReference type="ChEBI" id="CHEBI:57287"/>
        <dbReference type="ChEBI" id="CHEBI:87305"/>
        <dbReference type="EC" id="2.3.1.188"/>
    </reaction>
</comment>
<comment type="biophysicochemical properties">
    <kinetics>
        <KM>9.7 uM for feruloyl-CoA</KM>
        <KM>36.7 uM for p-coumaroyl-CoA</KM>
        <KM>5.1 uM for 16-OH-palmitic acid</KM>
        <text>16-hydroxypalmitic acid is the main acyl acceptor.</text>
    </kinetics>
    <phDependence>
        <text>Optimum pH is 7.5.</text>
    </phDependence>
    <temperatureDependence>
        <text>Optimum temperature is 10 degrees Celsius.</text>
    </temperatureDependence>
</comment>
<comment type="alternative products">
    <event type="alternative splicing"/>
    <isoform>
        <id>Q94CD1-1</id>
        <name>1</name>
        <sequence type="displayed"/>
    </isoform>
    <text>A number of isoforms are produced. According to EST sequences.</text>
</comment>
<comment type="tissue specificity">
    <text evidence="2 3">Expressed in roots, seedlings, leaves, stems, flowers and siliques. Detected at the protein level in roots and in seed coats.</text>
</comment>
<comment type="developmental stage">
    <text>Detected in seed coats in the inner layer of the outer integument at the beginning of the desiccation stage. Also expressed at the chalazal region as desiccation proceeds.</text>
</comment>
<comment type="disruption phenotype">
    <text evidence="2 3">Elimination of suberin-associated ester-linked ferulate. Altered permeability and sensitivity of seeds and roots to salt stress.</text>
</comment>
<comment type="similarity">
    <text evidence="4">Belongs to the plant acyltransferase family.</text>
</comment>
<comment type="sequence caution" evidence="4">
    <conflict type="erroneous gene model prediction">
        <sequence resource="EMBL-CDS" id="BAB09706"/>
    </conflict>
</comment>
<evidence type="ECO:0000250" key="1">
    <source>
        <dbReference type="UniProtKB" id="Q9FI78"/>
    </source>
</evidence>
<evidence type="ECO:0000269" key="2">
    <source>
    </source>
</evidence>
<evidence type="ECO:0000269" key="3">
    <source>
    </source>
</evidence>
<evidence type="ECO:0000305" key="4"/>
<dbReference type="EC" id="2.3.1.188"/>
<dbReference type="EMBL" id="GQ176867">
    <property type="protein sequence ID" value="ACY78659.1"/>
    <property type="molecule type" value="mRNA"/>
</dbReference>
<dbReference type="EMBL" id="AB010072">
    <property type="protein sequence ID" value="BAB09706.1"/>
    <property type="status" value="ALT_SEQ"/>
    <property type="molecule type" value="Genomic_DNA"/>
</dbReference>
<dbReference type="EMBL" id="CP002688">
    <property type="protein sequence ID" value="AED94628.1"/>
    <property type="molecule type" value="Genomic_DNA"/>
</dbReference>
<dbReference type="EMBL" id="AY034954">
    <property type="protein sequence ID" value="AAK59460.1"/>
    <property type="molecule type" value="mRNA"/>
</dbReference>
<dbReference type="EMBL" id="AY062996">
    <property type="protein sequence ID" value="AAL34170.1"/>
    <property type="molecule type" value="mRNA"/>
</dbReference>
<dbReference type="RefSeq" id="NP_851111.1">
    <molecule id="Q94CD1-1"/>
    <property type="nucleotide sequence ID" value="NM_180780.2"/>
</dbReference>
<dbReference type="SMR" id="Q94CD1"/>
<dbReference type="FunCoup" id="Q94CD1">
    <property type="interactions" value="10"/>
</dbReference>
<dbReference type="STRING" id="3702.Q94CD1"/>
<dbReference type="PaxDb" id="3702-AT5G41040.1"/>
<dbReference type="ProteomicsDB" id="230224">
    <molecule id="Q94CD1-1"/>
</dbReference>
<dbReference type="EnsemblPlants" id="AT5G41040.1">
    <molecule id="Q94CD1-1"/>
    <property type="protein sequence ID" value="AT5G41040.1"/>
    <property type="gene ID" value="AT5G41040"/>
</dbReference>
<dbReference type="GeneID" id="834106"/>
<dbReference type="Gramene" id="AT5G41040.1">
    <molecule id="Q94CD1-1"/>
    <property type="protein sequence ID" value="AT5G41040.1"/>
    <property type="gene ID" value="AT5G41040"/>
</dbReference>
<dbReference type="KEGG" id="ath:AT5G41040"/>
<dbReference type="Araport" id="AT5G41040"/>
<dbReference type="TAIR" id="AT5G41040">
    <property type="gene designation" value="RWP1"/>
</dbReference>
<dbReference type="eggNOG" id="ENOG502QS3E">
    <property type="taxonomic scope" value="Eukaryota"/>
</dbReference>
<dbReference type="InParanoid" id="Q94CD1"/>
<dbReference type="OrthoDB" id="671439at2759"/>
<dbReference type="PhylomeDB" id="Q94CD1"/>
<dbReference type="BioCyc" id="ARA:AT5G41040-MONOMER"/>
<dbReference type="PRO" id="PR:Q94CD1"/>
<dbReference type="Proteomes" id="UP000006548">
    <property type="component" value="Chromosome 5"/>
</dbReference>
<dbReference type="ExpressionAtlas" id="Q94CD1">
    <property type="expression patterns" value="baseline and differential"/>
</dbReference>
<dbReference type="GO" id="GO:0050734">
    <property type="term" value="F:hydroxycinnamoyltransferase activity"/>
    <property type="evidence" value="ECO:0000314"/>
    <property type="project" value="TAIR"/>
</dbReference>
<dbReference type="GO" id="GO:0102406">
    <property type="term" value="F:omega-hydroxypalmitate O-sinapoyl transferase activity"/>
    <property type="evidence" value="ECO:0007669"/>
    <property type="project" value="UniProtKB-EC"/>
</dbReference>
<dbReference type="GO" id="GO:0052325">
    <property type="term" value="P:cell wall pectin biosynthetic process"/>
    <property type="evidence" value="ECO:0000315"/>
    <property type="project" value="TAIR"/>
</dbReference>
<dbReference type="GO" id="GO:0010345">
    <property type="term" value="P:suberin biosynthetic process"/>
    <property type="evidence" value="ECO:0000315"/>
    <property type="project" value="TAIR"/>
</dbReference>
<dbReference type="FunFam" id="3.30.559.10:FF:000015">
    <property type="entry name" value="Spermidine hydroxycinnamoyl transferase"/>
    <property type="match status" value="1"/>
</dbReference>
<dbReference type="FunFam" id="3.30.559.10:FF:000008">
    <property type="entry name" value="Tryptamine hydroxycinnamoyl transferase"/>
    <property type="match status" value="1"/>
</dbReference>
<dbReference type="Gene3D" id="3.30.559.10">
    <property type="entry name" value="Chloramphenicol acetyltransferase-like domain"/>
    <property type="match status" value="2"/>
</dbReference>
<dbReference type="InterPro" id="IPR023213">
    <property type="entry name" value="CAT-like_dom_sf"/>
</dbReference>
<dbReference type="InterPro" id="IPR050317">
    <property type="entry name" value="Plant_Fungal_Acyltransferase"/>
</dbReference>
<dbReference type="PANTHER" id="PTHR31642:SF318">
    <property type="entry name" value="OMEGA-HYDROXYPALMITATE O-FERULOYL TRANSFERASE"/>
    <property type="match status" value="1"/>
</dbReference>
<dbReference type="PANTHER" id="PTHR31642">
    <property type="entry name" value="TRICHOTHECENE 3-O-ACETYLTRANSFERASE"/>
    <property type="match status" value="1"/>
</dbReference>
<dbReference type="Pfam" id="PF02458">
    <property type="entry name" value="Transferase"/>
    <property type="match status" value="1"/>
</dbReference>
<sequence length="457" mass="50958">MVAENNKNKDVTLSASMDNNNNNIKGTNIHLEVHQKEPALVKPESETRKGLYFLSNLDQNIAVIVRTIYCFKSEERGNEEAVQVIKKALSQVLVHYYPLAGRLTISPEGKLTVDCTEEGVVFVEAEANCKMDEIGDITKPDPETLGKLVYDVVDAKNILEIPPVTAQVTKFKCGGFVLGLCMNHCMFDGIGAMEFVNSWGQVARGLPLTTPPFSDRTILNARNPPKIENLHQEFEEIEDKSNINSLYTKEPTLYRSFCFDPEKIKKLKLQATENSESLLGNSCTSFEALSAFVWRARTKSLKMLSDQKTKLLFAVDGRAKFEPQLPKGYFGNGIVLTNSICEAGELIEKPLSFAVGLVREAIKMVTDGYMRSAIDYFEVTRARPSLSSTLLITTWSRLGFHTTDFGWGEPILSGPVALPEKEVTLFLSHGEQRRSINVLLGLPATAMDVFQEQFLQI</sequence>